<sequence>MKVPEAAISRLITYLRILEELEAQGVHRTSSEQLGELAQVTAFQVRKDLSYFGSYGTRGVGYTVPVLKRELRHILGLNRKWGLCIVGMGRLGSALADYPGFGESFELRGFFDVDPEKVGRPVRGGVIEHVDLLPQRVPGRIEIALLTVPREAAQKAADLLVAAGIKGILNFAPVVLEVPKEVAVENVDFLAGLTRLSFAILNPKWREEMMG</sequence>
<comment type="function">
    <text evidence="1">Modulates transcription in response to changes in cellular NADH/NAD(+) redox state.</text>
</comment>
<comment type="subunit">
    <text evidence="1 2">Homodimer.</text>
</comment>
<comment type="interaction">
    <interactant intactId="EBI-15532709">
        <id>Q9X2V5</id>
    </interactant>
    <interactant intactId="EBI-15532709">
        <id>Q9X2V5</id>
        <label>rex</label>
    </interactant>
    <organismsDiffer>false</organismsDiffer>
    <experiments>3</experiments>
</comment>
<comment type="subcellular location">
    <subcellularLocation>
        <location evidence="1">Cytoplasm</location>
    </subcellularLocation>
</comment>
<comment type="similarity">
    <text evidence="1">Belongs to the transcriptional regulatory Rex family.</text>
</comment>
<dbReference type="EMBL" id="AF061257">
    <property type="protein sequence ID" value="AAD22519.1"/>
    <property type="molecule type" value="Genomic_DNA"/>
</dbReference>
<dbReference type="PDB" id="1XCB">
    <property type="method" value="X-ray"/>
    <property type="resolution" value="2.90 A"/>
    <property type="chains" value="A/B/C/D/E/F/G=1-211"/>
</dbReference>
<dbReference type="PDBsum" id="1XCB"/>
<dbReference type="SMR" id="Q9X2V5"/>
<dbReference type="DIP" id="DIP-48428N"/>
<dbReference type="EvolutionaryTrace" id="Q9X2V5"/>
<dbReference type="GO" id="GO:0005737">
    <property type="term" value="C:cytoplasm"/>
    <property type="evidence" value="ECO:0007669"/>
    <property type="project" value="UniProtKB-SubCell"/>
</dbReference>
<dbReference type="GO" id="GO:0003677">
    <property type="term" value="F:DNA binding"/>
    <property type="evidence" value="ECO:0007669"/>
    <property type="project" value="UniProtKB-UniRule"/>
</dbReference>
<dbReference type="GO" id="GO:0003700">
    <property type="term" value="F:DNA-binding transcription factor activity"/>
    <property type="evidence" value="ECO:0007669"/>
    <property type="project" value="UniProtKB-UniRule"/>
</dbReference>
<dbReference type="GO" id="GO:0042802">
    <property type="term" value="F:identical protein binding"/>
    <property type="evidence" value="ECO:0000353"/>
    <property type="project" value="IntAct"/>
</dbReference>
<dbReference type="GO" id="GO:0045892">
    <property type="term" value="P:negative regulation of DNA-templated transcription"/>
    <property type="evidence" value="ECO:0007669"/>
    <property type="project" value="InterPro"/>
</dbReference>
<dbReference type="GO" id="GO:0051775">
    <property type="term" value="P:response to redox state"/>
    <property type="evidence" value="ECO:0007669"/>
    <property type="project" value="InterPro"/>
</dbReference>
<dbReference type="Gene3D" id="3.40.50.720">
    <property type="entry name" value="NAD(P)-binding Rossmann-like Domain"/>
    <property type="match status" value="1"/>
</dbReference>
<dbReference type="Gene3D" id="1.10.10.10">
    <property type="entry name" value="Winged helix-like DNA-binding domain superfamily/Winged helix DNA-binding domain"/>
    <property type="match status" value="1"/>
</dbReference>
<dbReference type="HAMAP" id="MF_01131">
    <property type="entry name" value="Rex"/>
    <property type="match status" value="1"/>
</dbReference>
<dbReference type="InterPro" id="IPR003781">
    <property type="entry name" value="CoA-bd"/>
</dbReference>
<dbReference type="InterPro" id="IPR036291">
    <property type="entry name" value="NAD(P)-bd_dom_sf"/>
</dbReference>
<dbReference type="InterPro" id="IPR009718">
    <property type="entry name" value="Rex_DNA-bd_C_dom"/>
</dbReference>
<dbReference type="InterPro" id="IPR022876">
    <property type="entry name" value="Tscrpt_rep_Rex"/>
</dbReference>
<dbReference type="InterPro" id="IPR036388">
    <property type="entry name" value="WH-like_DNA-bd_sf"/>
</dbReference>
<dbReference type="InterPro" id="IPR036390">
    <property type="entry name" value="WH_DNA-bd_sf"/>
</dbReference>
<dbReference type="NCBIfam" id="NF003992">
    <property type="entry name" value="PRK05472.2-1"/>
    <property type="match status" value="1"/>
</dbReference>
<dbReference type="NCBIfam" id="NF003993">
    <property type="entry name" value="PRK05472.2-2"/>
    <property type="match status" value="1"/>
</dbReference>
<dbReference type="NCBIfam" id="NF003994">
    <property type="entry name" value="PRK05472.2-3"/>
    <property type="match status" value="1"/>
</dbReference>
<dbReference type="NCBIfam" id="NF003995">
    <property type="entry name" value="PRK05472.2-4"/>
    <property type="match status" value="1"/>
</dbReference>
<dbReference type="NCBIfam" id="NF003996">
    <property type="entry name" value="PRK05472.2-5"/>
    <property type="match status" value="1"/>
</dbReference>
<dbReference type="PANTHER" id="PTHR35786">
    <property type="entry name" value="REDOX-SENSING TRANSCRIPTIONAL REPRESSOR REX"/>
    <property type="match status" value="1"/>
</dbReference>
<dbReference type="PANTHER" id="PTHR35786:SF1">
    <property type="entry name" value="REDOX-SENSING TRANSCRIPTIONAL REPRESSOR REX 1"/>
    <property type="match status" value="1"/>
</dbReference>
<dbReference type="Pfam" id="PF02629">
    <property type="entry name" value="CoA_binding"/>
    <property type="match status" value="1"/>
</dbReference>
<dbReference type="Pfam" id="PF06971">
    <property type="entry name" value="Put_DNA-bind_N"/>
    <property type="match status" value="1"/>
</dbReference>
<dbReference type="SMART" id="SM00881">
    <property type="entry name" value="CoA_binding"/>
    <property type="match status" value="1"/>
</dbReference>
<dbReference type="SUPFAM" id="SSF51735">
    <property type="entry name" value="NAD(P)-binding Rossmann-fold domains"/>
    <property type="match status" value="1"/>
</dbReference>
<dbReference type="SUPFAM" id="SSF46785">
    <property type="entry name" value="Winged helix' DNA-binding domain"/>
    <property type="match status" value="1"/>
</dbReference>
<name>REX_THEAQ</name>
<reference key="1">
    <citation type="journal article" date="1999" name="Nucleic Acids Res.">
        <title>Identification, cloning and expression of p25, an AT-rich DNA-binding protein from the extreme thermophile, Thermus aquaticus YT-1.</title>
        <authorList>
            <person name="Du X."/>
            <person name="Pene J.J."/>
        </authorList>
    </citation>
    <scope>NUCLEOTIDE SEQUENCE [GENOMIC DNA]</scope>
    <scope>PROTEIN SEQUENCE OF 1-17</scope>
    <scope>SUBUNIT</scope>
    <source>
        <strain>ATCC 25104 / DSM 625 / JCM 10724 / NBRC 103206 / NCIMB 11243 / YT-1</strain>
    </source>
</reference>
<feature type="chain" id="PRO_0000097925" description="Redox-sensing transcriptional repressor Rex">
    <location>
        <begin position="1"/>
        <end position="211"/>
    </location>
</feature>
<feature type="DNA-binding region" description="H-T-H motif" evidence="1">
    <location>
        <begin position="13"/>
        <end position="52"/>
    </location>
</feature>
<feature type="binding site" evidence="1">
    <location>
        <begin position="87"/>
        <end position="92"/>
    </location>
    <ligand>
        <name>NAD(+)</name>
        <dbReference type="ChEBI" id="CHEBI:57540"/>
    </ligand>
</feature>
<feature type="helix" evidence="3">
    <location>
        <begin position="5"/>
        <end position="21"/>
    </location>
</feature>
<feature type="turn" evidence="3">
    <location>
        <begin position="22"/>
        <end position="25"/>
    </location>
</feature>
<feature type="helix" evidence="3">
    <location>
        <begin position="31"/>
        <end position="38"/>
    </location>
</feature>
<feature type="helix" evidence="3">
    <location>
        <begin position="42"/>
        <end position="50"/>
    </location>
</feature>
<feature type="helix" evidence="3">
    <location>
        <begin position="64"/>
        <end position="74"/>
    </location>
</feature>
<feature type="turn" evidence="3">
    <location>
        <begin position="75"/>
        <end position="78"/>
    </location>
</feature>
<feature type="strand" evidence="3">
    <location>
        <begin position="81"/>
        <end position="87"/>
    </location>
</feature>
<feature type="helix" evidence="3">
    <location>
        <begin position="90"/>
        <end position="95"/>
    </location>
</feature>
<feature type="strand" evidence="3">
    <location>
        <begin position="103"/>
        <end position="111"/>
    </location>
</feature>
<feature type="turn" evidence="3">
    <location>
        <begin position="115"/>
        <end position="119"/>
    </location>
</feature>
<feature type="strand" evidence="3">
    <location>
        <begin position="123"/>
        <end position="128"/>
    </location>
</feature>
<feature type="strand" evidence="3">
    <location>
        <begin position="130"/>
        <end position="132"/>
    </location>
</feature>
<feature type="helix" evidence="3">
    <location>
        <begin position="133"/>
        <end position="135"/>
    </location>
</feature>
<feature type="turn" evidence="3">
    <location>
        <begin position="138"/>
        <end position="140"/>
    </location>
</feature>
<feature type="strand" evidence="3">
    <location>
        <begin position="143"/>
        <end position="146"/>
    </location>
</feature>
<feature type="helix" evidence="3">
    <location>
        <begin position="150"/>
        <end position="162"/>
    </location>
</feature>
<feature type="strand" evidence="3">
    <location>
        <begin position="166"/>
        <end position="170"/>
    </location>
</feature>
<feature type="strand" evidence="3">
    <location>
        <begin position="172"/>
        <end position="174"/>
    </location>
</feature>
<feature type="strand" evidence="3">
    <location>
        <begin position="182"/>
        <end position="186"/>
    </location>
</feature>
<feature type="turn" evidence="3">
    <location>
        <begin position="189"/>
        <end position="192"/>
    </location>
</feature>
<feature type="helix" evidence="3">
    <location>
        <begin position="193"/>
        <end position="201"/>
    </location>
</feature>
<feature type="turn" evidence="3">
    <location>
        <begin position="203"/>
        <end position="205"/>
    </location>
</feature>
<gene>
    <name evidence="1" type="primary">rex</name>
</gene>
<evidence type="ECO:0000255" key="1">
    <source>
        <dbReference type="HAMAP-Rule" id="MF_01131"/>
    </source>
</evidence>
<evidence type="ECO:0000269" key="2">
    <source>
    </source>
</evidence>
<evidence type="ECO:0007829" key="3">
    <source>
        <dbReference type="PDB" id="1XCB"/>
    </source>
</evidence>
<protein>
    <recommendedName>
        <fullName evidence="1">Redox-sensing transcriptional repressor Rex</fullName>
    </recommendedName>
</protein>
<accession>Q9X2V5</accession>
<organism>
    <name type="scientific">Thermus aquaticus</name>
    <dbReference type="NCBI Taxonomy" id="271"/>
    <lineage>
        <taxon>Bacteria</taxon>
        <taxon>Thermotogati</taxon>
        <taxon>Deinococcota</taxon>
        <taxon>Deinococci</taxon>
        <taxon>Thermales</taxon>
        <taxon>Thermaceae</taxon>
        <taxon>Thermus</taxon>
    </lineage>
</organism>
<keyword id="KW-0002">3D-structure</keyword>
<keyword id="KW-0963">Cytoplasm</keyword>
<keyword id="KW-0903">Direct protein sequencing</keyword>
<keyword id="KW-0238">DNA-binding</keyword>
<keyword id="KW-0520">NAD</keyword>
<keyword id="KW-0678">Repressor</keyword>
<keyword id="KW-0804">Transcription</keyword>
<keyword id="KW-0805">Transcription regulation</keyword>
<proteinExistence type="evidence at protein level"/>